<dbReference type="EMBL" id="DS231706">
    <property type="protein sequence ID" value="KNB08567.1"/>
    <property type="molecule type" value="Genomic_DNA"/>
</dbReference>
<dbReference type="RefSeq" id="XP_018246612.1">
    <property type="nucleotide sequence ID" value="XM_018388532.1"/>
</dbReference>
<dbReference type="GeneID" id="28950956"/>
<dbReference type="KEGG" id="fox:FOXG_09390"/>
<dbReference type="VEuPathDB" id="FungiDB:FOXG_09390"/>
<dbReference type="OrthoDB" id="67972at110618"/>
<dbReference type="Proteomes" id="UP000009097">
    <property type="component" value="Unassembled WGS sequence"/>
</dbReference>
<dbReference type="GO" id="GO:0005634">
    <property type="term" value="C:nucleus"/>
    <property type="evidence" value="ECO:0007669"/>
    <property type="project" value="UniProtKB-SubCell"/>
</dbReference>
<dbReference type="GO" id="GO:0003677">
    <property type="term" value="F:DNA binding"/>
    <property type="evidence" value="ECO:0007669"/>
    <property type="project" value="InterPro"/>
</dbReference>
<dbReference type="GO" id="GO:0000981">
    <property type="term" value="F:DNA-binding transcription factor activity, RNA polymerase II-specific"/>
    <property type="evidence" value="ECO:0007669"/>
    <property type="project" value="InterPro"/>
</dbReference>
<dbReference type="GO" id="GO:0008270">
    <property type="term" value="F:zinc ion binding"/>
    <property type="evidence" value="ECO:0007669"/>
    <property type="project" value="InterPro"/>
</dbReference>
<dbReference type="GO" id="GO:0006351">
    <property type="term" value="P:DNA-templated transcription"/>
    <property type="evidence" value="ECO:0007669"/>
    <property type="project" value="InterPro"/>
</dbReference>
<dbReference type="CDD" id="cd12148">
    <property type="entry name" value="fungal_TF_MHR"/>
    <property type="match status" value="1"/>
</dbReference>
<dbReference type="CDD" id="cd00067">
    <property type="entry name" value="GAL4"/>
    <property type="match status" value="1"/>
</dbReference>
<dbReference type="Gene3D" id="4.10.240.10">
    <property type="entry name" value="Zn(2)-C6 fungal-type DNA-binding domain"/>
    <property type="match status" value="1"/>
</dbReference>
<dbReference type="InterPro" id="IPR050815">
    <property type="entry name" value="TF_fung"/>
</dbReference>
<dbReference type="InterPro" id="IPR007219">
    <property type="entry name" value="Transcription_factor_dom_fun"/>
</dbReference>
<dbReference type="InterPro" id="IPR036864">
    <property type="entry name" value="Zn2-C6_fun-type_DNA-bd_sf"/>
</dbReference>
<dbReference type="InterPro" id="IPR001138">
    <property type="entry name" value="Zn2Cys6_DnaBD"/>
</dbReference>
<dbReference type="PANTHER" id="PTHR47338:SF27">
    <property type="entry name" value="ZN(II)2CYS6 TRANSCRIPTION FACTOR (EUROFUNG)"/>
    <property type="match status" value="1"/>
</dbReference>
<dbReference type="PANTHER" id="PTHR47338">
    <property type="entry name" value="ZN(II)2CYS6 TRANSCRIPTION FACTOR (EUROFUNG)-RELATED"/>
    <property type="match status" value="1"/>
</dbReference>
<dbReference type="Pfam" id="PF04082">
    <property type="entry name" value="Fungal_trans"/>
    <property type="match status" value="1"/>
</dbReference>
<dbReference type="Pfam" id="PF00172">
    <property type="entry name" value="Zn_clus"/>
    <property type="match status" value="1"/>
</dbReference>
<dbReference type="PRINTS" id="PR00755">
    <property type="entry name" value="AFLATOXINBRP"/>
</dbReference>
<dbReference type="SMART" id="SM00906">
    <property type="entry name" value="Fungal_trans"/>
    <property type="match status" value="1"/>
</dbReference>
<dbReference type="SMART" id="SM00066">
    <property type="entry name" value="GAL4"/>
    <property type="match status" value="1"/>
</dbReference>
<dbReference type="SUPFAM" id="SSF57701">
    <property type="entry name" value="Zn2/Cys6 DNA-binding domain"/>
    <property type="match status" value="1"/>
</dbReference>
<dbReference type="PROSITE" id="PS00463">
    <property type="entry name" value="ZN2_CY6_FUNGAL_1"/>
    <property type="match status" value="1"/>
</dbReference>
<dbReference type="PROSITE" id="PS50048">
    <property type="entry name" value="ZN2_CY6_FUNGAL_2"/>
    <property type="match status" value="1"/>
</dbReference>
<accession>A0A0J9WP80</accession>
<comment type="function">
    <text evidence="2 3">Zn(2)-C6 fungal-type transcription factor that has a role in conidia production and also in plant colonization (PubMed:26817616, PubMed:36986302). Acts as a negative regulator of the production of macroconidia and is required for full virulence and the positive regulation of SIX effectors (PubMed:36986302). In addition, FTF2 is also involved in the regulation of class II hydrophobins FOXG_02746 and FOXG_02748 likely required for plant colonization (PubMed:26817616, PubMed:36986302).</text>
</comment>
<comment type="subcellular location">
    <subcellularLocation>
        <location evidence="1">Nucleus</location>
    </subcellularLocation>
</comment>
<comment type="disruption phenotype">
    <text evidence="2 3">Leads to a reduced ability to colonize the root systema and thus in a reduced virulence.</text>
</comment>
<comment type="miscellaneous">
    <text evidence="2">In contrast to the FTF1 gene which is present in multiple copies in highly virulent fusarium oxysporum strains, FTF2 is only present in a single copy.</text>
</comment>
<keyword id="KW-0238">DNA-binding</keyword>
<keyword id="KW-0479">Metal-binding</keyword>
<keyword id="KW-0539">Nucleus</keyword>
<keyword id="KW-1185">Reference proteome</keyword>
<keyword id="KW-0804">Transcription</keyword>
<keyword id="KW-0805">Transcription regulation</keyword>
<keyword id="KW-0843">Virulence</keyword>
<feature type="chain" id="PRO_0000462480" description="Zn(2)-C6 fungal-type transcription factor FTF2">
    <location>
        <begin position="1"/>
        <end position="1072"/>
    </location>
</feature>
<feature type="DNA-binding region" description="Zn(2)-C6 fungal-type" evidence="1">
    <location>
        <begin position="179"/>
        <end position="206"/>
    </location>
</feature>
<evidence type="ECO:0000255" key="1">
    <source>
        <dbReference type="PROSITE-ProRule" id="PRU00227"/>
    </source>
</evidence>
<evidence type="ECO:0000269" key="2">
    <source>
    </source>
</evidence>
<evidence type="ECO:0000269" key="3">
    <source>
    </source>
</evidence>
<evidence type="ECO:0000303" key="4">
    <source>
    </source>
</evidence>
<organism>
    <name type="scientific">Fusarium oxysporum f. sp. lycopersici (strain 4287 / CBS 123668 / FGSC 9935 / NRRL 34936)</name>
    <name type="common">Fusarium vascular wilt of tomato</name>
    <dbReference type="NCBI Taxonomy" id="426428"/>
    <lineage>
        <taxon>Eukaryota</taxon>
        <taxon>Fungi</taxon>
        <taxon>Dikarya</taxon>
        <taxon>Ascomycota</taxon>
        <taxon>Pezizomycotina</taxon>
        <taxon>Sordariomycetes</taxon>
        <taxon>Hypocreomycetidae</taxon>
        <taxon>Hypocreales</taxon>
        <taxon>Nectriaceae</taxon>
        <taxon>Fusarium</taxon>
        <taxon>Fusarium oxysporum species complex</taxon>
    </lineage>
</organism>
<proteinExistence type="inferred from homology"/>
<reference key="1">
    <citation type="journal article" date="2010" name="Nature">
        <title>Comparative genomics reveals mobile pathogenicity chromosomes in Fusarium.</title>
        <authorList>
            <person name="Ma L.-J."/>
            <person name="van der Does H.C."/>
            <person name="Borkovich K.A."/>
            <person name="Coleman J.J."/>
            <person name="Daboussi M.-J."/>
            <person name="Di Pietro A."/>
            <person name="Dufresne M."/>
            <person name="Freitag M."/>
            <person name="Grabherr M."/>
            <person name="Henrissat B."/>
            <person name="Houterman P.M."/>
            <person name="Kang S."/>
            <person name="Shim W.-B."/>
            <person name="Woloshuk C."/>
            <person name="Xie X."/>
            <person name="Xu J.-R."/>
            <person name="Antoniw J."/>
            <person name="Baker S.E."/>
            <person name="Bluhm B.H."/>
            <person name="Breakspear A."/>
            <person name="Brown D.W."/>
            <person name="Butchko R.A.E."/>
            <person name="Chapman S."/>
            <person name="Coulson R."/>
            <person name="Coutinho P.M."/>
            <person name="Danchin E.G.J."/>
            <person name="Diener A."/>
            <person name="Gale L.R."/>
            <person name="Gardiner D.M."/>
            <person name="Goff S."/>
            <person name="Hammond-Kosack K.E."/>
            <person name="Hilburn K."/>
            <person name="Hua-Van A."/>
            <person name="Jonkers W."/>
            <person name="Kazan K."/>
            <person name="Kodira C.D."/>
            <person name="Koehrsen M."/>
            <person name="Kumar L."/>
            <person name="Lee Y.-H."/>
            <person name="Li L."/>
            <person name="Manners J.M."/>
            <person name="Miranda-Saavedra D."/>
            <person name="Mukherjee M."/>
            <person name="Park G."/>
            <person name="Park J."/>
            <person name="Park S.-Y."/>
            <person name="Proctor R.H."/>
            <person name="Regev A."/>
            <person name="Ruiz-Roldan M.C."/>
            <person name="Sain D."/>
            <person name="Sakthikumar S."/>
            <person name="Sykes S."/>
            <person name="Schwartz D.C."/>
            <person name="Turgeon B.G."/>
            <person name="Wapinski I."/>
            <person name="Yoder O."/>
            <person name="Young S."/>
            <person name="Zeng Q."/>
            <person name="Zhou S."/>
            <person name="Galagan J."/>
            <person name="Cuomo C.A."/>
            <person name="Kistler H.C."/>
            <person name="Rep M."/>
        </authorList>
    </citation>
    <scope>NUCLEOTIDE SEQUENCE [LARGE SCALE GENOMIC DNA]</scope>
    <source>
        <strain>4287 / CBS 123668 / FGSC 9935 / NRRL 34936</strain>
    </source>
</reference>
<reference key="2">
    <citation type="journal article" date="2016" name="Mol. Plant Pathol.">
        <title>The FTF gene family regulates virulence and expression of SIX effectors in Fusarium oxysporum.</title>
        <authorList>
            <person name="Nino-Sanchez J."/>
            <person name="Casado-Del Castillo V."/>
            <person name="Tello V."/>
            <person name="De Vega-Bartol J.J."/>
            <person name="Ramos B."/>
            <person name="Sukno S.A."/>
            <person name="Diaz Minguez J.M."/>
        </authorList>
    </citation>
    <scope>FUNCTION</scope>
    <scope>DISRUPTION PHENOTYPE</scope>
</reference>
<reference key="3">
    <citation type="journal article" date="2023" name="Pathogens">
        <title>The Role of the Fusarium oxysporum FTF2 Transcription Factor in Host Colonization and Virulence in Common Bean Plants (Phaseolus vulgaris L.).</title>
        <authorList>
            <person name="Casado-Del Castillo V."/>
            <person name="Benito E.P."/>
            <person name="Diaz-Minguez J.M."/>
        </authorList>
    </citation>
    <scope>FUNCTION</scope>
    <scope>DISRUPTION PHENOTYPE</scope>
</reference>
<protein>
    <recommendedName>
        <fullName evidence="4">Zn(2)-C6 fungal-type transcription factor FTF2</fullName>
    </recommendedName>
    <alternativeName>
        <fullName evidence="4">Fusarium transcription factor 2</fullName>
    </alternativeName>
</protein>
<sequence length="1072" mass="116791">MSGRAVSNSQHAQQSFGSGPQLYRDVAELHAVPSPSHGALMDPSHFDDFAFAYQGLPDQPSLVSLADHAHAHASQSPTAFPQHQAMSGLAHNGLPFGALPAGNRSQSMDGSDAPPDRTSPASNALEDSTTDEFGLASRSRADATDLGGKPKEDKADATPAWSELKTKAGKERKRLPLACIACRRKKIRCSGEKPACKHCLRSRIPCVYKVTTRKAAPRTDYMAMLDKRLKRMEERIIKVIPKSDQEVASSVTRAVVKPAIPGTVPSNKPTKKRGAEEAFGPDLEAWAKAPSKPKIDGDDRPSSLQVQEAEENKLQHEGTEALPSKEIQEHLAEVFFDNIYGQSYHLLHKPSYMRKLKNGTLPPVLVLTVCAVAARFTSSPLVNSSGPEFLRGEEWASHARDICTRRYEWPNLTILTCLLILGLHEFGTCQGGRSWALGGQAIRMAFALQLHKDLEYDPSGRTGPKKQLSFIDREIRRRIMWACFLMDRFNSSGTDRPMFIREDTIQIPLPVKEKYFQFDMPAPTEMLDGQVPHPASPNDGQLADARENMGVAAFLIRAIALWGRIITYLSQGGKDLDPNPMWEDESQYVKHLNDVVNLEASLPSSLKYSAENLDVHKTENTASQFLFMHICLQHNILFVSRAAMSARKQQGVHDDFFSEASKRTFSAANQISELLREAEQSRCFVSAPFAGYCAFSSTTVHILGVISGNPNMKPTAEANLTTNVKYLHKMKKYWGMFHWMVENVRTQYRNALDAMRAGANLQDRAAQSSFLQYGDWFNRYPHGLSDAEFMDPATHKRKDSGADGVLEAKPELQSVEEYFSTLPTPQSVEHKDTIRAVGTKRKQSAKKQAGLPTQSGQHLESMQGTDADSVSGAQERRFSGGLGLPSNSYNPLAVSNAQNPAFSTAMSPMSPANMTAFSHHAHTPTFFPPELLAMNFGQGANGNIDPLDRQLVFGGYSLDASTGLGGGQDIMSGLDWDAVASGAHPDGGLQGRRSTAKAGMNGQAAGMADGAGLSGPEASSAWFMPFNMEPPEMGQDPGFNMGGIDPFTGVFGGGGSGLATPNALGGLQQQGP</sequence>
<gene>
    <name evidence="4" type="primary">FTF2</name>
    <name type="ORF">FOXG_09390</name>
</gene>
<name>FTF2_FUSO4</name>